<proteinExistence type="inferred from homology"/>
<protein>
    <recommendedName>
        <fullName evidence="1">Cysteine--tRNA ligase</fullName>
        <ecNumber evidence="1">6.1.1.16</ecNumber>
    </recommendedName>
    <alternativeName>
        <fullName evidence="1">Cysteinyl-tRNA synthetase</fullName>
        <shortName evidence="1">CysRS</shortName>
    </alternativeName>
</protein>
<feature type="chain" id="PRO_1000199028" description="Cysteine--tRNA ligase">
    <location>
        <begin position="1"/>
        <end position="473"/>
    </location>
</feature>
<feature type="short sequence motif" description="'HIGH' region">
    <location>
        <begin position="32"/>
        <end position="42"/>
    </location>
</feature>
<feature type="short sequence motif" description="'KMSKS' region">
    <location>
        <begin position="270"/>
        <end position="274"/>
    </location>
</feature>
<feature type="binding site" evidence="1">
    <location>
        <position position="30"/>
    </location>
    <ligand>
        <name>Zn(2+)</name>
        <dbReference type="ChEBI" id="CHEBI:29105"/>
    </ligand>
</feature>
<feature type="binding site" evidence="1">
    <location>
        <position position="213"/>
    </location>
    <ligand>
        <name>Zn(2+)</name>
        <dbReference type="ChEBI" id="CHEBI:29105"/>
    </ligand>
</feature>
<feature type="binding site" evidence="1">
    <location>
        <position position="238"/>
    </location>
    <ligand>
        <name>Zn(2+)</name>
        <dbReference type="ChEBI" id="CHEBI:29105"/>
    </ligand>
</feature>
<feature type="binding site" evidence="1">
    <location>
        <position position="242"/>
    </location>
    <ligand>
        <name>Zn(2+)</name>
        <dbReference type="ChEBI" id="CHEBI:29105"/>
    </ligand>
</feature>
<feature type="binding site" evidence="1">
    <location>
        <position position="273"/>
    </location>
    <ligand>
        <name>ATP</name>
        <dbReference type="ChEBI" id="CHEBI:30616"/>
    </ligand>
</feature>
<comment type="catalytic activity">
    <reaction evidence="1">
        <text>tRNA(Cys) + L-cysteine + ATP = L-cysteinyl-tRNA(Cys) + AMP + diphosphate</text>
        <dbReference type="Rhea" id="RHEA:17773"/>
        <dbReference type="Rhea" id="RHEA-COMP:9661"/>
        <dbReference type="Rhea" id="RHEA-COMP:9679"/>
        <dbReference type="ChEBI" id="CHEBI:30616"/>
        <dbReference type="ChEBI" id="CHEBI:33019"/>
        <dbReference type="ChEBI" id="CHEBI:35235"/>
        <dbReference type="ChEBI" id="CHEBI:78442"/>
        <dbReference type="ChEBI" id="CHEBI:78517"/>
        <dbReference type="ChEBI" id="CHEBI:456215"/>
        <dbReference type="EC" id="6.1.1.16"/>
    </reaction>
</comment>
<comment type="cofactor">
    <cofactor evidence="1">
        <name>Zn(2+)</name>
        <dbReference type="ChEBI" id="CHEBI:29105"/>
    </cofactor>
    <text evidence="1">Binds 1 zinc ion per subunit.</text>
</comment>
<comment type="subunit">
    <text evidence="1">Monomer.</text>
</comment>
<comment type="subcellular location">
    <subcellularLocation>
        <location evidence="1">Cytoplasm</location>
    </subcellularLocation>
</comment>
<comment type="similarity">
    <text evidence="1">Belongs to the class-I aminoacyl-tRNA synthetase family.</text>
</comment>
<organism>
    <name type="scientific">Acinetobacter baumannii (strain AB307-0294)</name>
    <dbReference type="NCBI Taxonomy" id="557600"/>
    <lineage>
        <taxon>Bacteria</taxon>
        <taxon>Pseudomonadati</taxon>
        <taxon>Pseudomonadota</taxon>
        <taxon>Gammaproteobacteria</taxon>
        <taxon>Moraxellales</taxon>
        <taxon>Moraxellaceae</taxon>
        <taxon>Acinetobacter</taxon>
        <taxon>Acinetobacter calcoaceticus/baumannii complex</taxon>
    </lineage>
</organism>
<reference key="1">
    <citation type="journal article" date="2008" name="J. Bacteriol.">
        <title>Comparative genome sequence analysis of multidrug-resistant Acinetobacter baumannii.</title>
        <authorList>
            <person name="Adams M.D."/>
            <person name="Goglin K."/>
            <person name="Molyneaux N."/>
            <person name="Hujer K.M."/>
            <person name="Lavender H."/>
            <person name="Jamison J.J."/>
            <person name="MacDonald I.J."/>
            <person name="Martin K.M."/>
            <person name="Russo T."/>
            <person name="Campagnari A.A."/>
            <person name="Hujer A.M."/>
            <person name="Bonomo R.A."/>
            <person name="Gill S.R."/>
        </authorList>
    </citation>
    <scope>NUCLEOTIDE SEQUENCE [LARGE SCALE GENOMIC DNA]</scope>
    <source>
        <strain>AB307-0294</strain>
    </source>
</reference>
<accession>B7GWA1</accession>
<keyword id="KW-0030">Aminoacyl-tRNA synthetase</keyword>
<keyword id="KW-0067">ATP-binding</keyword>
<keyword id="KW-0963">Cytoplasm</keyword>
<keyword id="KW-0436">Ligase</keyword>
<keyword id="KW-0479">Metal-binding</keyword>
<keyword id="KW-0547">Nucleotide-binding</keyword>
<keyword id="KW-0648">Protein biosynthesis</keyword>
<keyword id="KW-0862">Zinc</keyword>
<sequence>MQPFVLYNSEQRKKVEFVPRKEGHIDMYVCGMTVYDYCHIGHARVMVAFDYIIRFLRSQGWKVRYIRNITDIDDKIIKRANENGETIQQLTTRFIDAMNEDAANLGCLAPDEAPKATEYIDQMQNMIGNLVNKGAAYPASNGDVYFEVTKFEKYGRLSGRKLDDMQAGASERIDVEVEKKHPFDFVLWKHAKENEPSWASPWGNGRPGWHIECSAMSTCCLGNHFDIHGGGSDLMFPHHENEIAQSEASTGEQYVNYWMHVGFINVDGEKMSKSLGNFFTIRDVMEKFHPEVIRYFIVSSHYRSPVNFSDVALKEAKTSLTRFYHSFKAYQQVYGQTTTEALDQSFIERFNNAMCDDFNTAEAMAVLFELNKELNRAVKEEQADQATVLYSTLRHLTNILGLVQHNVDDFLKSDIGQDALALSDAEIEDFIQQRVDAKKAKDFAKADSIRQSLLEQGVVLEDTRQGTVWRRAD</sequence>
<gene>
    <name evidence="1" type="primary">cysS</name>
    <name type="ordered locus">ABBFA_002309</name>
</gene>
<evidence type="ECO:0000255" key="1">
    <source>
        <dbReference type="HAMAP-Rule" id="MF_00041"/>
    </source>
</evidence>
<name>SYC_ACIB3</name>
<dbReference type="EC" id="6.1.1.16" evidence="1"/>
<dbReference type="EMBL" id="CP001172">
    <property type="protein sequence ID" value="ACJ56042.1"/>
    <property type="molecule type" value="Genomic_DNA"/>
</dbReference>
<dbReference type="RefSeq" id="WP_001182272.1">
    <property type="nucleotide sequence ID" value="NZ_CP001172.1"/>
</dbReference>
<dbReference type="SMR" id="B7GWA1"/>
<dbReference type="HOGENOM" id="CLU_013528_0_1_6"/>
<dbReference type="Proteomes" id="UP000006924">
    <property type="component" value="Chromosome"/>
</dbReference>
<dbReference type="GO" id="GO:0005829">
    <property type="term" value="C:cytosol"/>
    <property type="evidence" value="ECO:0007669"/>
    <property type="project" value="TreeGrafter"/>
</dbReference>
<dbReference type="GO" id="GO:0005524">
    <property type="term" value="F:ATP binding"/>
    <property type="evidence" value="ECO:0007669"/>
    <property type="project" value="UniProtKB-UniRule"/>
</dbReference>
<dbReference type="GO" id="GO:0004817">
    <property type="term" value="F:cysteine-tRNA ligase activity"/>
    <property type="evidence" value="ECO:0007669"/>
    <property type="project" value="UniProtKB-UniRule"/>
</dbReference>
<dbReference type="GO" id="GO:0008270">
    <property type="term" value="F:zinc ion binding"/>
    <property type="evidence" value="ECO:0007669"/>
    <property type="project" value="UniProtKB-UniRule"/>
</dbReference>
<dbReference type="GO" id="GO:0006423">
    <property type="term" value="P:cysteinyl-tRNA aminoacylation"/>
    <property type="evidence" value="ECO:0007669"/>
    <property type="project" value="UniProtKB-UniRule"/>
</dbReference>
<dbReference type="CDD" id="cd07963">
    <property type="entry name" value="Anticodon_Ia_Cys"/>
    <property type="match status" value="1"/>
</dbReference>
<dbReference type="CDD" id="cd00672">
    <property type="entry name" value="CysRS_core"/>
    <property type="match status" value="1"/>
</dbReference>
<dbReference type="FunFam" id="3.40.50.620:FF:000009">
    <property type="entry name" value="Cysteine--tRNA ligase"/>
    <property type="match status" value="1"/>
</dbReference>
<dbReference type="Gene3D" id="1.20.120.1910">
    <property type="entry name" value="Cysteine-tRNA ligase, C-terminal anti-codon recognition domain"/>
    <property type="match status" value="1"/>
</dbReference>
<dbReference type="Gene3D" id="3.40.50.620">
    <property type="entry name" value="HUPs"/>
    <property type="match status" value="1"/>
</dbReference>
<dbReference type="HAMAP" id="MF_00041">
    <property type="entry name" value="Cys_tRNA_synth"/>
    <property type="match status" value="1"/>
</dbReference>
<dbReference type="InterPro" id="IPR015803">
    <property type="entry name" value="Cys-tRNA-ligase"/>
</dbReference>
<dbReference type="InterPro" id="IPR015273">
    <property type="entry name" value="Cys-tRNA-synt_Ia_DALR"/>
</dbReference>
<dbReference type="InterPro" id="IPR024909">
    <property type="entry name" value="Cys-tRNA/MSH_ligase"/>
</dbReference>
<dbReference type="InterPro" id="IPR014729">
    <property type="entry name" value="Rossmann-like_a/b/a_fold"/>
</dbReference>
<dbReference type="InterPro" id="IPR032678">
    <property type="entry name" value="tRNA-synt_1_cat_dom"/>
</dbReference>
<dbReference type="InterPro" id="IPR009080">
    <property type="entry name" value="tRNAsynth_Ia_anticodon-bd"/>
</dbReference>
<dbReference type="NCBIfam" id="TIGR00435">
    <property type="entry name" value="cysS"/>
    <property type="match status" value="1"/>
</dbReference>
<dbReference type="PANTHER" id="PTHR10890:SF3">
    <property type="entry name" value="CYSTEINE--TRNA LIGASE, CYTOPLASMIC"/>
    <property type="match status" value="1"/>
</dbReference>
<dbReference type="PANTHER" id="PTHR10890">
    <property type="entry name" value="CYSTEINYL-TRNA SYNTHETASE"/>
    <property type="match status" value="1"/>
</dbReference>
<dbReference type="Pfam" id="PF09190">
    <property type="entry name" value="DALR_2"/>
    <property type="match status" value="1"/>
</dbReference>
<dbReference type="Pfam" id="PF01406">
    <property type="entry name" value="tRNA-synt_1e"/>
    <property type="match status" value="1"/>
</dbReference>
<dbReference type="PRINTS" id="PR00983">
    <property type="entry name" value="TRNASYNTHCYS"/>
</dbReference>
<dbReference type="SMART" id="SM00840">
    <property type="entry name" value="DALR_2"/>
    <property type="match status" value="1"/>
</dbReference>
<dbReference type="SUPFAM" id="SSF47323">
    <property type="entry name" value="Anticodon-binding domain of a subclass of class I aminoacyl-tRNA synthetases"/>
    <property type="match status" value="1"/>
</dbReference>
<dbReference type="SUPFAM" id="SSF52374">
    <property type="entry name" value="Nucleotidylyl transferase"/>
    <property type="match status" value="1"/>
</dbReference>